<keyword id="KW-0067">ATP-binding</keyword>
<keyword id="KW-0175">Coiled coil</keyword>
<keyword id="KW-0963">Cytoplasm</keyword>
<keyword id="KW-0347">Helicase</keyword>
<keyword id="KW-0378">Hydrolase</keyword>
<keyword id="KW-0547">Nucleotide-binding</keyword>
<keyword id="KW-0539">Nucleus</keyword>
<keyword id="KW-1185">Reference proteome</keyword>
<keyword id="KW-0694">RNA-binding</keyword>
<accession>Q5F485</accession>
<sequence length="944" mass="103054">MNWNKGGPGTKRGFGFGGFAITPGKKEEPKLSQQSHSAFGTAGSSAAFAKSGPPQLPSFYKIGSKRANFDEENAYFEDEEEDNSNVDLPYIPAENSPTRQQFNSKSADSDSDDDPLEAFMAEVEDQAARDMKRLEDKDKEKKNAKGIRDDIEEEDDQEAYFRYMAENPTAGVVQEEEEDNLEYDSDGNPIAPSKKIIDPLPPIDHSEIEYPPFEKNFYDEHEEITSLTPQQVVELRHKLNLRVSGAAPPRPGSSFARFGFDEQLMHQIRKSEYTQPTPIQCQGVPVAMSGRDMIGIAKTGSGKTAAFIWPMLIHIMDQKELEPGDGPIAVIVCPTRELCQQIHSECKRFGKAYNLRSVAVYGGGSMWEQAKALQEGAEIVVCTPGRLIDHVKKKATNLQRVTYLVFDEADRMFDMGFEYQVRSIASHVRPDRQTLLFSATFRKKIEKLARDILIDPIRVVQGDIGEANEDVTQIVEIFPSGPSKWNWLTRRLVEFTSSGSVLLFVTKKANAEELANNLKQEDHNLGLLHGDMDQSERNKVISEFKKKGIPILVATDVAARGLDIPSIKTVINYDVARDIDTHTHRIGRTGRAGEKGVAYTLLTPKDSNFAGDLVRNLEGANQHVSKELLDLAMQNPWFRKSRFKGGKGKKPNIGGGGLGYRERPGLGSESSDRGNNNSVMSNYEAYKPSSGAMGDRLTAMKAAFQSQYKSHFVAASLNNQKTGSSAAGASGWTSAGSLNSVPTSSAQQNAANPDSPIAATAAAKGVPGFTSTGTLSSVPTFPSVGVQGYSNNSSANASAGNREGVGSAGSAPRGGSSGGGGGGIVRERYSDNRNSRHNEVPRRGEGGGRYNDVQHHGEGGGRYSDAYRHGEGRHGDSHRHAEGRHFTDTGGGNRNNVDGRNISEGRSNESRNGENRKDANSRDNKTDGFAVPEPPKRKKSRWDS</sequence>
<evidence type="ECO:0000250" key="1">
    <source>
        <dbReference type="UniProtKB" id="Q86XP3"/>
    </source>
</evidence>
<evidence type="ECO:0000255" key="2"/>
<evidence type="ECO:0000255" key="3">
    <source>
        <dbReference type="PROSITE-ProRule" id="PRU00541"/>
    </source>
</evidence>
<evidence type="ECO:0000255" key="4">
    <source>
        <dbReference type="PROSITE-ProRule" id="PRU00542"/>
    </source>
</evidence>
<evidence type="ECO:0000256" key="5">
    <source>
        <dbReference type="SAM" id="MobiDB-lite"/>
    </source>
</evidence>
<evidence type="ECO:0000303" key="6">
    <source>
    </source>
</evidence>
<evidence type="ECO:0000305" key="7"/>
<reference key="1">
    <citation type="journal article" date="2005" name="Genome Biol.">
        <title>Full-length cDNAs from chicken bursal lymphocytes to facilitate gene function analysis.</title>
        <authorList>
            <person name="Caldwell R.B."/>
            <person name="Kierzek A.M."/>
            <person name="Arakawa H."/>
            <person name="Bezzubov Y."/>
            <person name="Zaim J."/>
            <person name="Fiedler P."/>
            <person name="Kutter S."/>
            <person name="Blagodatski A."/>
            <person name="Kostovska D."/>
            <person name="Koter M."/>
            <person name="Plachy J."/>
            <person name="Carninci P."/>
            <person name="Hayashizaki Y."/>
            <person name="Buerstedde J.-M."/>
        </authorList>
    </citation>
    <scope>NUCLEOTIDE SEQUENCE [LARGE SCALE MRNA]</scope>
    <source>
        <strain>CB</strain>
        <tissue>Bursa of Fabricius</tissue>
    </source>
</reference>
<protein>
    <recommendedName>
        <fullName>ATP-dependent RNA helicase DDX42</fullName>
        <ecNumber evidence="1">3.6.4.13</ecNumber>
    </recommendedName>
    <alternativeName>
        <fullName>DEAD box protein 42</fullName>
    </alternativeName>
</protein>
<comment type="function">
    <text evidence="1">ATP-dependent RNA helicase that binds to partially double-stranded RNAs (dsRNAs) in order to unwind RNA secondary structures. Unwinding is promoted in the presence of single-strand binding proteins. Also mediates RNA duplex formation thereby displacing the single-strand RNA binding protein. ATP and ADP modulate its activity: ATP binding and hydrolysis by DDX42 triggers RNA strand separation, whereas the ADP-bound form of the protein triggers annealing of complementary RNA strands. Required for assembly of the 17S U2 SnRNP complex of the spliceosome, a large ribonucleoprotein complex that removes introns from transcribed pre-mRNAs: DDX42 associates transiently with the SF3B subcomplex of the 17S U2 SnRNP complex and is released after fulfilling its role in the assembly of 17S U2 SnRNP.</text>
</comment>
<comment type="catalytic activity">
    <reaction evidence="1">
        <text>ATP + H2O = ADP + phosphate + H(+)</text>
        <dbReference type="Rhea" id="RHEA:13065"/>
        <dbReference type="ChEBI" id="CHEBI:15377"/>
        <dbReference type="ChEBI" id="CHEBI:15378"/>
        <dbReference type="ChEBI" id="CHEBI:30616"/>
        <dbReference type="ChEBI" id="CHEBI:43474"/>
        <dbReference type="ChEBI" id="CHEBI:456216"/>
        <dbReference type="EC" id="3.6.4.13"/>
    </reaction>
</comment>
<comment type="subunit">
    <text evidence="1">Transient component of the SF3B subcomplex of the 17S U2 SnRNP complex.</text>
</comment>
<comment type="subcellular location">
    <subcellularLocation>
        <location evidence="1">Cytoplasm</location>
    </subcellularLocation>
    <subcellularLocation>
        <location evidence="1">Nucleus</location>
    </subcellularLocation>
</comment>
<comment type="similarity">
    <text evidence="7">Belongs to the DEAD box helicase family. DDX42 subfamily.</text>
</comment>
<feature type="chain" id="PRO_0000280061" description="ATP-dependent RNA helicase DDX42">
    <location>
        <begin position="1"/>
        <end position="944"/>
    </location>
</feature>
<feature type="domain" description="Helicase ATP-binding" evidence="3">
    <location>
        <begin position="284"/>
        <end position="459"/>
    </location>
</feature>
<feature type="domain" description="Helicase C-terminal" evidence="4">
    <location>
        <begin position="487"/>
        <end position="632"/>
    </location>
</feature>
<feature type="region of interest" description="Disordered" evidence="5">
    <location>
        <begin position="1"/>
        <end position="119"/>
    </location>
</feature>
<feature type="region of interest" description="Disordered" evidence="5">
    <location>
        <begin position="131"/>
        <end position="155"/>
    </location>
</feature>
<feature type="region of interest" description="Disordered" evidence="5">
    <location>
        <begin position="182"/>
        <end position="203"/>
    </location>
</feature>
<feature type="region of interest" description="Disordered" evidence="5">
    <location>
        <begin position="642"/>
        <end position="682"/>
    </location>
</feature>
<feature type="region of interest" description="Disordered" evidence="5">
    <location>
        <begin position="723"/>
        <end position="753"/>
    </location>
</feature>
<feature type="region of interest" description="Disordered" evidence="5">
    <location>
        <begin position="794"/>
        <end position="944"/>
    </location>
</feature>
<feature type="coiled-coil region" evidence="2">
    <location>
        <begin position="120"/>
        <end position="157"/>
    </location>
</feature>
<feature type="short sequence motif" description="Q motif">
    <location>
        <begin position="253"/>
        <end position="281"/>
    </location>
</feature>
<feature type="short sequence motif" description="DEAD box">
    <location>
        <begin position="407"/>
        <end position="410"/>
    </location>
</feature>
<feature type="compositionally biased region" description="Gly residues" evidence="5">
    <location>
        <begin position="1"/>
        <end position="18"/>
    </location>
</feature>
<feature type="compositionally biased region" description="Low complexity" evidence="5">
    <location>
        <begin position="35"/>
        <end position="52"/>
    </location>
</feature>
<feature type="compositionally biased region" description="Acidic residues" evidence="5">
    <location>
        <begin position="70"/>
        <end position="84"/>
    </location>
</feature>
<feature type="compositionally biased region" description="Basic and acidic residues" evidence="5">
    <location>
        <begin position="131"/>
        <end position="149"/>
    </location>
</feature>
<feature type="compositionally biased region" description="Low complexity" evidence="5">
    <location>
        <begin position="723"/>
        <end position="737"/>
    </location>
</feature>
<feature type="compositionally biased region" description="Polar residues" evidence="5">
    <location>
        <begin position="738"/>
        <end position="752"/>
    </location>
</feature>
<feature type="compositionally biased region" description="Low complexity" evidence="5">
    <location>
        <begin position="794"/>
        <end position="814"/>
    </location>
</feature>
<feature type="compositionally biased region" description="Gly residues" evidence="5">
    <location>
        <begin position="815"/>
        <end position="824"/>
    </location>
</feature>
<feature type="compositionally biased region" description="Basic and acidic residues" evidence="5">
    <location>
        <begin position="825"/>
        <end position="887"/>
    </location>
</feature>
<feature type="compositionally biased region" description="Basic and acidic residues" evidence="5">
    <location>
        <begin position="901"/>
        <end position="926"/>
    </location>
</feature>
<feature type="binding site" evidence="3">
    <location>
        <begin position="297"/>
        <end position="304"/>
    </location>
    <ligand>
        <name>ATP</name>
        <dbReference type="ChEBI" id="CHEBI:30616"/>
    </ligand>
</feature>
<gene>
    <name type="primary">DDX42</name>
    <name evidence="6" type="ORF">RCJMB04_2e15</name>
</gene>
<name>DDX42_CHICK</name>
<organism>
    <name type="scientific">Gallus gallus</name>
    <name type="common">Chicken</name>
    <dbReference type="NCBI Taxonomy" id="9031"/>
    <lineage>
        <taxon>Eukaryota</taxon>
        <taxon>Metazoa</taxon>
        <taxon>Chordata</taxon>
        <taxon>Craniata</taxon>
        <taxon>Vertebrata</taxon>
        <taxon>Euteleostomi</taxon>
        <taxon>Archelosauria</taxon>
        <taxon>Archosauria</taxon>
        <taxon>Dinosauria</taxon>
        <taxon>Saurischia</taxon>
        <taxon>Theropoda</taxon>
        <taxon>Coelurosauria</taxon>
        <taxon>Aves</taxon>
        <taxon>Neognathae</taxon>
        <taxon>Galloanserae</taxon>
        <taxon>Galliformes</taxon>
        <taxon>Phasianidae</taxon>
        <taxon>Phasianinae</taxon>
        <taxon>Gallus</taxon>
    </lineage>
</organism>
<dbReference type="EC" id="3.6.4.13" evidence="1"/>
<dbReference type="EMBL" id="AJ851415">
    <property type="protein sequence ID" value="CAH65049.1"/>
    <property type="molecule type" value="mRNA"/>
</dbReference>
<dbReference type="RefSeq" id="NP_001026097.1">
    <property type="nucleotide sequence ID" value="NM_001030926.1"/>
</dbReference>
<dbReference type="SMR" id="Q5F485"/>
<dbReference type="FunCoup" id="Q5F485">
    <property type="interactions" value="4095"/>
</dbReference>
<dbReference type="STRING" id="9031.ENSGALP00000000810"/>
<dbReference type="GlyGen" id="Q5F485">
    <property type="glycosylation" value="1 site"/>
</dbReference>
<dbReference type="PaxDb" id="9031-ENSGALP00000000810"/>
<dbReference type="GeneID" id="419959"/>
<dbReference type="KEGG" id="gga:419959"/>
<dbReference type="CTD" id="11325"/>
<dbReference type="VEuPathDB" id="HostDB:geneid_419959"/>
<dbReference type="eggNOG" id="KOG0339">
    <property type="taxonomic scope" value="Eukaryota"/>
</dbReference>
<dbReference type="InParanoid" id="Q5F485"/>
<dbReference type="OMA" id="DHTWEQT"/>
<dbReference type="OrthoDB" id="196131at2759"/>
<dbReference type="PhylomeDB" id="Q5F485"/>
<dbReference type="PRO" id="PR:Q5F485"/>
<dbReference type="Proteomes" id="UP000000539">
    <property type="component" value="Unassembled WGS sequence"/>
</dbReference>
<dbReference type="GO" id="GO:0005737">
    <property type="term" value="C:cytoplasm"/>
    <property type="evidence" value="ECO:0000250"/>
    <property type="project" value="UniProtKB"/>
</dbReference>
<dbReference type="GO" id="GO:0005634">
    <property type="term" value="C:nucleus"/>
    <property type="evidence" value="ECO:0000250"/>
    <property type="project" value="UniProtKB"/>
</dbReference>
<dbReference type="GO" id="GO:0071004">
    <property type="term" value="C:U2-type prespliceosome"/>
    <property type="evidence" value="ECO:0000250"/>
    <property type="project" value="UniProtKB"/>
</dbReference>
<dbReference type="GO" id="GO:0005524">
    <property type="term" value="F:ATP binding"/>
    <property type="evidence" value="ECO:0007669"/>
    <property type="project" value="UniProtKB-KW"/>
</dbReference>
<dbReference type="GO" id="GO:0016887">
    <property type="term" value="F:ATP hydrolysis activity"/>
    <property type="evidence" value="ECO:0007669"/>
    <property type="project" value="RHEA"/>
</dbReference>
<dbReference type="GO" id="GO:0003723">
    <property type="term" value="F:RNA binding"/>
    <property type="evidence" value="ECO:0007669"/>
    <property type="project" value="UniProtKB-KW"/>
</dbReference>
<dbReference type="GO" id="GO:0003724">
    <property type="term" value="F:RNA helicase activity"/>
    <property type="evidence" value="ECO:0007669"/>
    <property type="project" value="UniProtKB-EC"/>
</dbReference>
<dbReference type="GO" id="GO:0008104">
    <property type="term" value="P:protein localization"/>
    <property type="evidence" value="ECO:0000250"/>
    <property type="project" value="UniProtKB"/>
</dbReference>
<dbReference type="GO" id="GO:0042981">
    <property type="term" value="P:regulation of apoptotic process"/>
    <property type="evidence" value="ECO:0000250"/>
    <property type="project" value="UniProtKB"/>
</dbReference>
<dbReference type="GO" id="GO:1903241">
    <property type="term" value="P:U2-type prespliceosome assembly"/>
    <property type="evidence" value="ECO:0000250"/>
    <property type="project" value="UniProtKB"/>
</dbReference>
<dbReference type="CDD" id="cd17952">
    <property type="entry name" value="DEADc_DDX42"/>
    <property type="match status" value="1"/>
</dbReference>
<dbReference type="CDD" id="cd18787">
    <property type="entry name" value="SF2_C_DEAD"/>
    <property type="match status" value="1"/>
</dbReference>
<dbReference type="FunFam" id="3.40.50.300:FF:000524">
    <property type="entry name" value="ATP-dependent RNA helicase DDX42"/>
    <property type="match status" value="1"/>
</dbReference>
<dbReference type="FunFam" id="3.40.50.300:FF:000079">
    <property type="entry name" value="probable ATP-dependent RNA helicase DDX17"/>
    <property type="match status" value="1"/>
</dbReference>
<dbReference type="Gene3D" id="3.40.50.300">
    <property type="entry name" value="P-loop containing nucleotide triphosphate hydrolases"/>
    <property type="match status" value="2"/>
</dbReference>
<dbReference type="InterPro" id="IPR011545">
    <property type="entry name" value="DEAD/DEAH_box_helicase_dom"/>
</dbReference>
<dbReference type="InterPro" id="IPR014001">
    <property type="entry name" value="Helicase_ATP-bd"/>
</dbReference>
<dbReference type="InterPro" id="IPR001650">
    <property type="entry name" value="Helicase_C-like"/>
</dbReference>
<dbReference type="InterPro" id="IPR027417">
    <property type="entry name" value="P-loop_NTPase"/>
</dbReference>
<dbReference type="InterPro" id="IPR000629">
    <property type="entry name" value="RNA-helicase_DEAD-box_CS"/>
</dbReference>
<dbReference type="InterPro" id="IPR014014">
    <property type="entry name" value="RNA_helicase_DEAD_Q_motif"/>
</dbReference>
<dbReference type="PANTHER" id="PTHR47958">
    <property type="entry name" value="ATP-DEPENDENT RNA HELICASE DBP3"/>
    <property type="match status" value="1"/>
</dbReference>
<dbReference type="Pfam" id="PF00270">
    <property type="entry name" value="DEAD"/>
    <property type="match status" value="1"/>
</dbReference>
<dbReference type="Pfam" id="PF00271">
    <property type="entry name" value="Helicase_C"/>
    <property type="match status" value="1"/>
</dbReference>
<dbReference type="SMART" id="SM00487">
    <property type="entry name" value="DEXDc"/>
    <property type="match status" value="1"/>
</dbReference>
<dbReference type="SMART" id="SM00490">
    <property type="entry name" value="HELICc"/>
    <property type="match status" value="1"/>
</dbReference>
<dbReference type="SUPFAM" id="SSF52540">
    <property type="entry name" value="P-loop containing nucleoside triphosphate hydrolases"/>
    <property type="match status" value="1"/>
</dbReference>
<dbReference type="PROSITE" id="PS00039">
    <property type="entry name" value="DEAD_ATP_HELICASE"/>
    <property type="match status" value="1"/>
</dbReference>
<dbReference type="PROSITE" id="PS51192">
    <property type="entry name" value="HELICASE_ATP_BIND_1"/>
    <property type="match status" value="1"/>
</dbReference>
<dbReference type="PROSITE" id="PS51194">
    <property type="entry name" value="HELICASE_CTER"/>
    <property type="match status" value="1"/>
</dbReference>
<dbReference type="PROSITE" id="PS51195">
    <property type="entry name" value="Q_MOTIF"/>
    <property type="match status" value="1"/>
</dbReference>
<proteinExistence type="evidence at transcript level"/>